<feature type="chain" id="PRO_0000340351" description="DNA ligase">
    <location>
        <begin position="1"/>
        <end position="668"/>
    </location>
</feature>
<feature type="domain" description="BRCT" evidence="1">
    <location>
        <begin position="587"/>
        <end position="668"/>
    </location>
</feature>
<feature type="active site" description="N6-AMP-lysine intermediate" evidence="1">
    <location>
        <position position="113"/>
    </location>
</feature>
<feature type="binding site" evidence="1">
    <location>
        <begin position="31"/>
        <end position="35"/>
    </location>
    <ligand>
        <name>NAD(+)</name>
        <dbReference type="ChEBI" id="CHEBI:57540"/>
    </ligand>
</feature>
<feature type="binding site" evidence="1">
    <location>
        <begin position="80"/>
        <end position="81"/>
    </location>
    <ligand>
        <name>NAD(+)</name>
        <dbReference type="ChEBI" id="CHEBI:57540"/>
    </ligand>
</feature>
<feature type="binding site" evidence="1">
    <location>
        <position position="111"/>
    </location>
    <ligand>
        <name>NAD(+)</name>
        <dbReference type="ChEBI" id="CHEBI:57540"/>
    </ligand>
</feature>
<feature type="binding site" evidence="1">
    <location>
        <position position="134"/>
    </location>
    <ligand>
        <name>NAD(+)</name>
        <dbReference type="ChEBI" id="CHEBI:57540"/>
    </ligand>
</feature>
<feature type="binding site" evidence="1">
    <location>
        <position position="170"/>
    </location>
    <ligand>
        <name>NAD(+)</name>
        <dbReference type="ChEBI" id="CHEBI:57540"/>
    </ligand>
</feature>
<feature type="binding site" evidence="1">
    <location>
        <position position="285"/>
    </location>
    <ligand>
        <name>NAD(+)</name>
        <dbReference type="ChEBI" id="CHEBI:57540"/>
    </ligand>
</feature>
<feature type="binding site" evidence="1">
    <location>
        <position position="309"/>
    </location>
    <ligand>
        <name>NAD(+)</name>
        <dbReference type="ChEBI" id="CHEBI:57540"/>
    </ligand>
</feature>
<feature type="binding site" evidence="1">
    <location>
        <position position="403"/>
    </location>
    <ligand>
        <name>Zn(2+)</name>
        <dbReference type="ChEBI" id="CHEBI:29105"/>
    </ligand>
</feature>
<feature type="binding site" evidence="1">
    <location>
        <position position="406"/>
    </location>
    <ligand>
        <name>Zn(2+)</name>
        <dbReference type="ChEBI" id="CHEBI:29105"/>
    </ligand>
</feature>
<feature type="binding site" evidence="1">
    <location>
        <position position="421"/>
    </location>
    <ligand>
        <name>Zn(2+)</name>
        <dbReference type="ChEBI" id="CHEBI:29105"/>
    </ligand>
</feature>
<feature type="binding site" evidence="1">
    <location>
        <position position="427"/>
    </location>
    <ligand>
        <name>Zn(2+)</name>
        <dbReference type="ChEBI" id="CHEBI:29105"/>
    </ligand>
</feature>
<proteinExistence type="inferred from homology"/>
<sequence>MNIQETIQTLREELNQHNYNYYVLDNATISDYDFDIKLKELQDLENKHPEFFDEDSPTQRVGGTVTKNFKTIAHQYRMYSLDNSYSKEDLIDWENRIQRVLGNVNLQYTCELKYDGASISISYQNGKLVQALTRGDGFQGDEVTNNIKTIKSIPLKLKGDYPERFDIRGEIILPFAGFEKMNQELIEIGETPYSNPRNTASGSLKLQDSAEVAKRPLECLLYTVAGNNLPFKTQFEGLESARKWGFKVPNEAKLVNSMQEVFDFIDYWDVHRHKLPYETDGVVIKVNSIHSQEELGYTAKSPRWAIAYKFKSEQASTKLKSISYQVGRTGAITPVANLEPVQLAGTIVKRASLHNADQIEKLDIRINDTVFVEKGGEIIPKIIAVDLEKRPENSEVTQYITHCPECETELVRNAGEANHYCPNFYGCPPQIIGRIQHYISRKAMDIEGLGGETVALLFKNGLVHNYADLYELKVEDILHLERMAQKSAENLVNGVEKSKEIPFESVLFALGIRFVGETVAKKLAKHYKNIDALSQASLMDLILVDEIGERIARSVIEFFENEENKIIIERLKKYGIQFETVERVNPNATEKFIGKTFVVSGVFSQFSRDELKKAIEDNGGKVGSSISAKTDFVVAGDNMGPAKLEKATKLNIPILSEDEFITKLNESE</sequence>
<name>DNLJ_FLAJ1</name>
<gene>
    <name evidence="1" type="primary">ligA</name>
    <name type="ordered locus">Fjoh_3475</name>
</gene>
<reference key="1">
    <citation type="journal article" date="2009" name="Appl. Environ. Microbiol.">
        <title>Novel features of the polysaccharide-digesting gliding bacterium Flavobacterium johnsoniae as revealed by genome sequence analysis.</title>
        <authorList>
            <person name="McBride M.J."/>
            <person name="Xie G."/>
            <person name="Martens E.C."/>
            <person name="Lapidus A."/>
            <person name="Henrissat B."/>
            <person name="Rhodes R.G."/>
            <person name="Goltsman E."/>
            <person name="Wang W."/>
            <person name="Xu J."/>
            <person name="Hunnicutt D.W."/>
            <person name="Staroscik A.M."/>
            <person name="Hoover T.R."/>
            <person name="Cheng Y.Q."/>
            <person name="Stein J.L."/>
        </authorList>
    </citation>
    <scope>NUCLEOTIDE SEQUENCE [LARGE SCALE GENOMIC DNA]</scope>
    <source>
        <strain>ATCC 17061 / DSM 2064 / JCM 8514 / BCRC 14874 / CCUG 350202 / NBRC 14942 / NCIMB 11054 / UW101</strain>
    </source>
</reference>
<protein>
    <recommendedName>
        <fullName evidence="1">DNA ligase</fullName>
        <ecNumber evidence="1">6.5.1.2</ecNumber>
    </recommendedName>
    <alternativeName>
        <fullName evidence="1">Polydeoxyribonucleotide synthase [NAD(+)]</fullName>
    </alternativeName>
</protein>
<comment type="function">
    <text evidence="1">DNA ligase that catalyzes the formation of phosphodiester linkages between 5'-phosphoryl and 3'-hydroxyl groups in double-stranded DNA using NAD as a coenzyme and as the energy source for the reaction. It is essential for DNA replication and repair of damaged DNA.</text>
</comment>
<comment type="catalytic activity">
    <reaction evidence="1">
        <text>NAD(+) + (deoxyribonucleotide)n-3'-hydroxyl + 5'-phospho-(deoxyribonucleotide)m = (deoxyribonucleotide)n+m + AMP + beta-nicotinamide D-nucleotide.</text>
        <dbReference type="EC" id="6.5.1.2"/>
    </reaction>
</comment>
<comment type="cofactor">
    <cofactor evidence="1">
        <name>Mg(2+)</name>
        <dbReference type="ChEBI" id="CHEBI:18420"/>
    </cofactor>
    <cofactor evidence="1">
        <name>Mn(2+)</name>
        <dbReference type="ChEBI" id="CHEBI:29035"/>
    </cofactor>
</comment>
<comment type="similarity">
    <text evidence="1">Belongs to the NAD-dependent DNA ligase family. LigA subfamily.</text>
</comment>
<accession>A5FE87</accession>
<evidence type="ECO:0000255" key="1">
    <source>
        <dbReference type="HAMAP-Rule" id="MF_01588"/>
    </source>
</evidence>
<keyword id="KW-0227">DNA damage</keyword>
<keyword id="KW-0234">DNA repair</keyword>
<keyword id="KW-0235">DNA replication</keyword>
<keyword id="KW-0436">Ligase</keyword>
<keyword id="KW-0460">Magnesium</keyword>
<keyword id="KW-0464">Manganese</keyword>
<keyword id="KW-0479">Metal-binding</keyword>
<keyword id="KW-0520">NAD</keyword>
<keyword id="KW-0862">Zinc</keyword>
<dbReference type="EC" id="6.5.1.2" evidence="1"/>
<dbReference type="EMBL" id="CP000685">
    <property type="protein sequence ID" value="ABQ06489.1"/>
    <property type="molecule type" value="Genomic_DNA"/>
</dbReference>
<dbReference type="RefSeq" id="WP_012025458.1">
    <property type="nucleotide sequence ID" value="NC_009441.1"/>
</dbReference>
<dbReference type="SMR" id="A5FE87"/>
<dbReference type="STRING" id="376686.Fjoh_3475"/>
<dbReference type="KEGG" id="fjo:Fjoh_3475"/>
<dbReference type="eggNOG" id="COG0272">
    <property type="taxonomic scope" value="Bacteria"/>
</dbReference>
<dbReference type="HOGENOM" id="CLU_007764_2_0_10"/>
<dbReference type="OrthoDB" id="9759736at2"/>
<dbReference type="Proteomes" id="UP000006694">
    <property type="component" value="Chromosome"/>
</dbReference>
<dbReference type="GO" id="GO:0005829">
    <property type="term" value="C:cytosol"/>
    <property type="evidence" value="ECO:0007669"/>
    <property type="project" value="TreeGrafter"/>
</dbReference>
<dbReference type="GO" id="GO:0003911">
    <property type="term" value="F:DNA ligase (NAD+) activity"/>
    <property type="evidence" value="ECO:0007669"/>
    <property type="project" value="UniProtKB-UniRule"/>
</dbReference>
<dbReference type="GO" id="GO:0046872">
    <property type="term" value="F:metal ion binding"/>
    <property type="evidence" value="ECO:0007669"/>
    <property type="project" value="UniProtKB-KW"/>
</dbReference>
<dbReference type="GO" id="GO:0006281">
    <property type="term" value="P:DNA repair"/>
    <property type="evidence" value="ECO:0007669"/>
    <property type="project" value="UniProtKB-KW"/>
</dbReference>
<dbReference type="GO" id="GO:0006260">
    <property type="term" value="P:DNA replication"/>
    <property type="evidence" value="ECO:0007669"/>
    <property type="project" value="UniProtKB-KW"/>
</dbReference>
<dbReference type="CDD" id="cd17748">
    <property type="entry name" value="BRCT_DNA_ligase_like"/>
    <property type="match status" value="1"/>
</dbReference>
<dbReference type="CDD" id="cd00114">
    <property type="entry name" value="LIGANc"/>
    <property type="match status" value="1"/>
</dbReference>
<dbReference type="FunFam" id="1.10.150.20:FF:000006">
    <property type="entry name" value="DNA ligase"/>
    <property type="match status" value="1"/>
</dbReference>
<dbReference type="FunFam" id="1.10.150.20:FF:000007">
    <property type="entry name" value="DNA ligase"/>
    <property type="match status" value="1"/>
</dbReference>
<dbReference type="FunFam" id="1.10.287.610:FF:000002">
    <property type="entry name" value="DNA ligase"/>
    <property type="match status" value="1"/>
</dbReference>
<dbReference type="FunFam" id="2.40.50.140:FF:000012">
    <property type="entry name" value="DNA ligase"/>
    <property type="match status" value="1"/>
</dbReference>
<dbReference type="FunFam" id="3.30.470.30:FF:000001">
    <property type="entry name" value="DNA ligase"/>
    <property type="match status" value="1"/>
</dbReference>
<dbReference type="Gene3D" id="6.20.10.30">
    <property type="match status" value="1"/>
</dbReference>
<dbReference type="Gene3D" id="1.10.150.20">
    <property type="entry name" value="5' to 3' exonuclease, C-terminal subdomain"/>
    <property type="match status" value="2"/>
</dbReference>
<dbReference type="Gene3D" id="3.40.50.10190">
    <property type="entry name" value="BRCT domain"/>
    <property type="match status" value="1"/>
</dbReference>
<dbReference type="Gene3D" id="3.30.470.30">
    <property type="entry name" value="DNA ligase/mRNA capping enzyme"/>
    <property type="match status" value="1"/>
</dbReference>
<dbReference type="Gene3D" id="1.10.287.610">
    <property type="entry name" value="Helix hairpin bin"/>
    <property type="match status" value="1"/>
</dbReference>
<dbReference type="Gene3D" id="2.40.50.140">
    <property type="entry name" value="Nucleic acid-binding proteins"/>
    <property type="match status" value="1"/>
</dbReference>
<dbReference type="HAMAP" id="MF_01588">
    <property type="entry name" value="DNA_ligase_A"/>
    <property type="match status" value="1"/>
</dbReference>
<dbReference type="InterPro" id="IPR001357">
    <property type="entry name" value="BRCT_dom"/>
</dbReference>
<dbReference type="InterPro" id="IPR036420">
    <property type="entry name" value="BRCT_dom_sf"/>
</dbReference>
<dbReference type="InterPro" id="IPR041663">
    <property type="entry name" value="DisA/LigA_HHH"/>
</dbReference>
<dbReference type="InterPro" id="IPR001679">
    <property type="entry name" value="DNA_ligase"/>
</dbReference>
<dbReference type="InterPro" id="IPR033136">
    <property type="entry name" value="DNA_ligase_CS"/>
</dbReference>
<dbReference type="InterPro" id="IPR013839">
    <property type="entry name" value="DNAligase_adenylation"/>
</dbReference>
<dbReference type="InterPro" id="IPR013840">
    <property type="entry name" value="DNAligase_N"/>
</dbReference>
<dbReference type="InterPro" id="IPR012340">
    <property type="entry name" value="NA-bd_OB-fold"/>
</dbReference>
<dbReference type="InterPro" id="IPR004150">
    <property type="entry name" value="NAD_DNA_ligase_OB"/>
</dbReference>
<dbReference type="InterPro" id="IPR010994">
    <property type="entry name" value="RuvA_2-like"/>
</dbReference>
<dbReference type="InterPro" id="IPR004149">
    <property type="entry name" value="Znf_DNAligase_C4"/>
</dbReference>
<dbReference type="NCBIfam" id="TIGR00575">
    <property type="entry name" value="dnlj"/>
    <property type="match status" value="1"/>
</dbReference>
<dbReference type="NCBIfam" id="NF005932">
    <property type="entry name" value="PRK07956.1"/>
    <property type="match status" value="1"/>
</dbReference>
<dbReference type="PANTHER" id="PTHR23389">
    <property type="entry name" value="CHROMOSOME TRANSMISSION FIDELITY FACTOR 18"/>
    <property type="match status" value="1"/>
</dbReference>
<dbReference type="PANTHER" id="PTHR23389:SF9">
    <property type="entry name" value="DNA LIGASE"/>
    <property type="match status" value="1"/>
</dbReference>
<dbReference type="Pfam" id="PF00533">
    <property type="entry name" value="BRCT"/>
    <property type="match status" value="1"/>
</dbReference>
<dbReference type="Pfam" id="PF01653">
    <property type="entry name" value="DNA_ligase_aden"/>
    <property type="match status" value="1"/>
</dbReference>
<dbReference type="Pfam" id="PF03120">
    <property type="entry name" value="DNA_ligase_OB"/>
    <property type="match status" value="1"/>
</dbReference>
<dbReference type="Pfam" id="PF03119">
    <property type="entry name" value="DNA_ligase_ZBD"/>
    <property type="match status" value="1"/>
</dbReference>
<dbReference type="Pfam" id="PF12826">
    <property type="entry name" value="HHH_2"/>
    <property type="match status" value="1"/>
</dbReference>
<dbReference type="Pfam" id="PF22745">
    <property type="entry name" value="Nlig-Ia"/>
    <property type="match status" value="1"/>
</dbReference>
<dbReference type="PIRSF" id="PIRSF001604">
    <property type="entry name" value="LigA"/>
    <property type="match status" value="1"/>
</dbReference>
<dbReference type="SMART" id="SM00292">
    <property type="entry name" value="BRCT"/>
    <property type="match status" value="1"/>
</dbReference>
<dbReference type="SMART" id="SM00532">
    <property type="entry name" value="LIGANc"/>
    <property type="match status" value="1"/>
</dbReference>
<dbReference type="SUPFAM" id="SSF52113">
    <property type="entry name" value="BRCT domain"/>
    <property type="match status" value="1"/>
</dbReference>
<dbReference type="SUPFAM" id="SSF56091">
    <property type="entry name" value="DNA ligase/mRNA capping enzyme, catalytic domain"/>
    <property type="match status" value="1"/>
</dbReference>
<dbReference type="SUPFAM" id="SSF50249">
    <property type="entry name" value="Nucleic acid-binding proteins"/>
    <property type="match status" value="1"/>
</dbReference>
<dbReference type="SUPFAM" id="SSF47781">
    <property type="entry name" value="RuvA domain 2-like"/>
    <property type="match status" value="1"/>
</dbReference>
<dbReference type="PROSITE" id="PS50172">
    <property type="entry name" value="BRCT"/>
    <property type="match status" value="1"/>
</dbReference>
<dbReference type="PROSITE" id="PS01056">
    <property type="entry name" value="DNA_LIGASE_N2"/>
    <property type="match status" value="1"/>
</dbReference>
<organism>
    <name type="scientific">Flavobacterium johnsoniae (strain ATCC 17061 / DSM 2064 / JCM 8514 / BCRC 14874 / CCUG 350202 / NBRC 14942 / NCIMB 11054 / UW101)</name>
    <name type="common">Cytophaga johnsonae</name>
    <dbReference type="NCBI Taxonomy" id="376686"/>
    <lineage>
        <taxon>Bacteria</taxon>
        <taxon>Pseudomonadati</taxon>
        <taxon>Bacteroidota</taxon>
        <taxon>Flavobacteriia</taxon>
        <taxon>Flavobacteriales</taxon>
        <taxon>Flavobacteriaceae</taxon>
        <taxon>Flavobacterium</taxon>
    </lineage>
</organism>